<proteinExistence type="evidence at transcript level"/>
<dbReference type="EMBL" id="X72933">
    <property type="protein sequence ID" value="CAA51438.1"/>
    <property type="molecule type" value="mRNA"/>
</dbReference>
<dbReference type="PIR" id="JN0465">
    <property type="entry name" value="JN0465"/>
</dbReference>
<dbReference type="RefSeq" id="NP_001003265.1">
    <property type="nucleotide sequence ID" value="NM_001003265.2"/>
</dbReference>
<dbReference type="SMR" id="P33703"/>
<dbReference type="FunCoup" id="P33703">
    <property type="interactions" value="13"/>
</dbReference>
<dbReference type="STRING" id="9615.ENSCAFP00000016597"/>
<dbReference type="GlyCosmos" id="P33703">
    <property type="glycosylation" value="6 sites, No reported glycans"/>
</dbReference>
<dbReference type="SwissPalm" id="P33703"/>
<dbReference type="PaxDb" id="9612-ENSCAFP00000016597"/>
<dbReference type="Ensembl" id="ENSCAFT00000017923.5">
    <property type="protein sequence ID" value="ENSCAFP00000016597.3"/>
    <property type="gene ID" value="ENSCAFG00000011281.5"/>
</dbReference>
<dbReference type="Ensembl" id="ENSCAFT00040038309.1">
    <property type="protein sequence ID" value="ENSCAFP00040033406.1"/>
    <property type="gene ID" value="ENSCAFG00040020697.1"/>
</dbReference>
<dbReference type="Ensembl" id="ENSCAFT00845049681.1">
    <property type="protein sequence ID" value="ENSCAFP00845038964.1"/>
    <property type="gene ID" value="ENSCAFG00845028150.1"/>
</dbReference>
<dbReference type="GeneID" id="403945"/>
<dbReference type="KEGG" id="cfa:403945"/>
<dbReference type="CTD" id="350"/>
<dbReference type="VEuPathDB" id="HostDB:ENSCAFG00845028150"/>
<dbReference type="VGNC" id="VGNC:38004">
    <property type="gene designation" value="APOH"/>
</dbReference>
<dbReference type="eggNOG" id="KOG4297">
    <property type="taxonomic scope" value="Eukaryota"/>
</dbReference>
<dbReference type="GeneTree" id="ENSGT00940000157228"/>
<dbReference type="HOGENOM" id="CLU_020107_2_0_1"/>
<dbReference type="InParanoid" id="P33703"/>
<dbReference type="OMA" id="TFAVMRQ"/>
<dbReference type="OrthoDB" id="6103690at2759"/>
<dbReference type="TreeFam" id="TF334137"/>
<dbReference type="Reactome" id="R-CFA-114608">
    <property type="pathway name" value="Platelet degranulation"/>
</dbReference>
<dbReference type="Proteomes" id="UP000002254">
    <property type="component" value="Chromosome 9"/>
</dbReference>
<dbReference type="Proteomes" id="UP000694429">
    <property type="component" value="Unplaced"/>
</dbReference>
<dbReference type="Proteomes" id="UP000694542">
    <property type="component" value="Chromosome 9"/>
</dbReference>
<dbReference type="Proteomes" id="UP000805418">
    <property type="component" value="Chromosome 9"/>
</dbReference>
<dbReference type="Bgee" id="ENSCAFG00000011281">
    <property type="expression patterns" value="Expressed in liver and 27 other cell types or tissues"/>
</dbReference>
<dbReference type="GO" id="GO:0009986">
    <property type="term" value="C:cell surface"/>
    <property type="evidence" value="ECO:0007669"/>
    <property type="project" value="Ensembl"/>
</dbReference>
<dbReference type="GO" id="GO:0042627">
    <property type="term" value="C:chylomicron"/>
    <property type="evidence" value="ECO:0007669"/>
    <property type="project" value="Ensembl"/>
</dbReference>
<dbReference type="GO" id="GO:0034364">
    <property type="term" value="C:high-density lipoprotein particle"/>
    <property type="evidence" value="ECO:0007669"/>
    <property type="project" value="Ensembl"/>
</dbReference>
<dbReference type="GO" id="GO:0034361">
    <property type="term" value="C:very-low-density lipoprotein particle"/>
    <property type="evidence" value="ECO:0007669"/>
    <property type="project" value="Ensembl"/>
</dbReference>
<dbReference type="GO" id="GO:0008201">
    <property type="term" value="F:heparin binding"/>
    <property type="evidence" value="ECO:0007669"/>
    <property type="project" value="UniProtKB-KW"/>
</dbReference>
<dbReference type="GO" id="GO:0042802">
    <property type="term" value="F:identical protein binding"/>
    <property type="evidence" value="ECO:0007669"/>
    <property type="project" value="Ensembl"/>
</dbReference>
<dbReference type="GO" id="GO:0060230">
    <property type="term" value="F:lipoprotein lipase activator activity"/>
    <property type="evidence" value="ECO:0007669"/>
    <property type="project" value="Ensembl"/>
</dbReference>
<dbReference type="GO" id="GO:0005543">
    <property type="term" value="F:phospholipid binding"/>
    <property type="evidence" value="ECO:0007669"/>
    <property type="project" value="Ensembl"/>
</dbReference>
<dbReference type="GO" id="GO:0007597">
    <property type="term" value="P:blood coagulation, intrinsic pathway"/>
    <property type="evidence" value="ECO:0007669"/>
    <property type="project" value="Ensembl"/>
</dbReference>
<dbReference type="GO" id="GO:0016525">
    <property type="term" value="P:negative regulation of angiogenesis"/>
    <property type="evidence" value="ECO:0007669"/>
    <property type="project" value="Ensembl"/>
</dbReference>
<dbReference type="GO" id="GO:0030195">
    <property type="term" value="P:negative regulation of blood coagulation"/>
    <property type="evidence" value="ECO:0007669"/>
    <property type="project" value="Ensembl"/>
</dbReference>
<dbReference type="GO" id="GO:0010596">
    <property type="term" value="P:negative regulation of endothelial cell migration"/>
    <property type="evidence" value="ECO:0007669"/>
    <property type="project" value="Ensembl"/>
</dbReference>
<dbReference type="GO" id="GO:0001937">
    <property type="term" value="P:negative regulation of endothelial cell proliferation"/>
    <property type="evidence" value="ECO:0007669"/>
    <property type="project" value="Ensembl"/>
</dbReference>
<dbReference type="GO" id="GO:0051918">
    <property type="term" value="P:negative regulation of fibrinolysis"/>
    <property type="evidence" value="ECO:0007669"/>
    <property type="project" value="Ensembl"/>
</dbReference>
<dbReference type="GO" id="GO:0033033">
    <property type="term" value="P:negative regulation of myeloid cell apoptotic process"/>
    <property type="evidence" value="ECO:0007669"/>
    <property type="project" value="Ensembl"/>
</dbReference>
<dbReference type="GO" id="GO:0034392">
    <property type="term" value="P:negative regulation of smooth muscle cell apoptotic process"/>
    <property type="evidence" value="ECO:0007669"/>
    <property type="project" value="Ensembl"/>
</dbReference>
<dbReference type="GO" id="GO:0031639">
    <property type="term" value="P:plasminogen activation"/>
    <property type="evidence" value="ECO:0007669"/>
    <property type="project" value="Ensembl"/>
</dbReference>
<dbReference type="GO" id="GO:0006641">
    <property type="term" value="P:triglyceride metabolic process"/>
    <property type="evidence" value="ECO:0007669"/>
    <property type="project" value="Ensembl"/>
</dbReference>
<dbReference type="CDD" id="cd00033">
    <property type="entry name" value="CCP"/>
    <property type="match status" value="4"/>
</dbReference>
<dbReference type="FunFam" id="2.10.70.10:FF:000089">
    <property type="entry name" value="Beta-2-glycoprotein 1"/>
    <property type="match status" value="1"/>
</dbReference>
<dbReference type="Gene3D" id="2.10.70.10">
    <property type="entry name" value="Complement Module, domain 1"/>
    <property type="match status" value="5"/>
</dbReference>
<dbReference type="InterPro" id="IPR050350">
    <property type="entry name" value="Compl-Cell_Adhes-Reg"/>
</dbReference>
<dbReference type="InterPro" id="IPR035976">
    <property type="entry name" value="Sushi/SCR/CCP_sf"/>
</dbReference>
<dbReference type="InterPro" id="IPR015104">
    <property type="entry name" value="Sushi_2"/>
</dbReference>
<dbReference type="InterPro" id="IPR000436">
    <property type="entry name" value="Sushi_SCR_CCP_dom"/>
</dbReference>
<dbReference type="PANTHER" id="PTHR19325:SF549">
    <property type="entry name" value="BETA-2-GLYCOPROTEIN 1"/>
    <property type="match status" value="1"/>
</dbReference>
<dbReference type="PANTHER" id="PTHR19325">
    <property type="entry name" value="COMPLEMENT COMPONENT-RELATED SUSHI DOMAIN-CONTAINING"/>
    <property type="match status" value="1"/>
</dbReference>
<dbReference type="Pfam" id="PF00084">
    <property type="entry name" value="Sushi"/>
    <property type="match status" value="4"/>
</dbReference>
<dbReference type="Pfam" id="PF09014">
    <property type="entry name" value="Sushi_2"/>
    <property type="match status" value="1"/>
</dbReference>
<dbReference type="SMART" id="SM00032">
    <property type="entry name" value="CCP"/>
    <property type="match status" value="4"/>
</dbReference>
<dbReference type="SUPFAM" id="SSF57535">
    <property type="entry name" value="Complement control module/SCR domain"/>
    <property type="match status" value="5"/>
</dbReference>
<dbReference type="PROSITE" id="PS50923">
    <property type="entry name" value="SUSHI"/>
    <property type="match status" value="4"/>
</dbReference>
<accession>P33703</accession>
<name>APOH_CANLF</name>
<sequence>MISLGLILFSSVLCHVATAGRTCPKPDDIPFATVVPLKTFYDPGEQIAYTCQPGYVFRGLTRRFTCPLTGVWPTNTVRCIPRVCPFAGILENGAVRYTTFEYPNTISFACNTGFYLNGSSSAKCTEEGKWSVDLPVCTRVTCPPPSVPKFATLSVFKPLATNNSLYGNKAVFECLPHYAMFGNDTITCTAHGNWTTLPECREVKCPFPSRPDNGFVNYPAKQILYYKDKAMYGCHDTYTLDGPEVVECNKFGNWSAQPSCKASCKLSVKKATVLYQGERVKLQEKFKDGMLHGQKVSFYCKNKEKKCSYTEDAECIDGTIEIPKCFKEHSSLAFWKTDASDVKPC</sequence>
<feature type="signal peptide" evidence="1">
    <location>
        <begin position="1"/>
        <end position="19"/>
    </location>
</feature>
<feature type="chain" id="PRO_0000002058" description="Beta-2-glycoprotein 1">
    <location>
        <begin position="20"/>
        <end position="345"/>
    </location>
</feature>
<feature type="domain" description="Sushi 1" evidence="4">
    <location>
        <begin position="21"/>
        <end position="81"/>
    </location>
</feature>
<feature type="domain" description="Sushi 2" evidence="4">
    <location>
        <begin position="82"/>
        <end position="139"/>
    </location>
</feature>
<feature type="domain" description="Sushi 3" evidence="4">
    <location>
        <begin position="140"/>
        <end position="202"/>
    </location>
</feature>
<feature type="domain" description="Sushi 4" evidence="4">
    <location>
        <begin position="203"/>
        <end position="262"/>
    </location>
</feature>
<feature type="region of interest" description="Sushi-like">
    <location>
        <begin position="263"/>
        <end position="345"/>
    </location>
</feature>
<feature type="glycosylation site" description="O-linked (GalNAc...) threonine" evidence="2">
    <location>
        <position position="33"/>
    </location>
</feature>
<feature type="glycosylation site" description="N-linked (GlcNAc...) asparagine" evidence="3">
    <location>
        <position position="117"/>
    </location>
</feature>
<feature type="glycosylation site" description="N-linked (GlcNAc...) asparagine" evidence="3">
    <location>
        <position position="162"/>
    </location>
</feature>
<feature type="glycosylation site" description="N-linked (GlcNAc...) asparagine" evidence="3">
    <location>
        <position position="183"/>
    </location>
</feature>
<feature type="glycosylation site" description="N-linked (GlcNAc...) asparagine" evidence="3">
    <location>
        <position position="193"/>
    </location>
</feature>
<feature type="glycosylation site" description="N-linked (GlcNAc...) asparagine" evidence="3">
    <location>
        <position position="253"/>
    </location>
</feature>
<feature type="disulfide bond" evidence="4">
    <location>
        <begin position="23"/>
        <end position="66"/>
    </location>
</feature>
<feature type="disulfide bond" evidence="4">
    <location>
        <begin position="51"/>
        <end position="79"/>
    </location>
</feature>
<feature type="disulfide bond" evidence="4">
    <location>
        <begin position="84"/>
        <end position="124"/>
    </location>
</feature>
<feature type="disulfide bond" evidence="4">
    <location>
        <begin position="110"/>
        <end position="137"/>
    </location>
</feature>
<feature type="disulfide bond" evidence="4">
    <location>
        <begin position="142"/>
        <end position="188"/>
    </location>
</feature>
<feature type="disulfide bond" evidence="4">
    <location>
        <begin position="174"/>
        <end position="200"/>
    </location>
</feature>
<feature type="disulfide bond" evidence="4">
    <location>
        <begin position="205"/>
        <end position="248"/>
    </location>
</feature>
<feature type="disulfide bond" evidence="4">
    <location>
        <begin position="234"/>
        <end position="260"/>
    </location>
</feature>
<feature type="disulfide bond" evidence="4">
    <location>
        <begin position="264"/>
        <end position="315"/>
    </location>
</feature>
<feature type="disulfide bond" evidence="4">
    <location>
        <begin position="300"/>
        <end position="325"/>
    </location>
</feature>
<feature type="disulfide bond" evidence="4">
    <location>
        <begin position="307"/>
        <end position="345"/>
    </location>
</feature>
<comment type="function">
    <text>Binds to various kinds of negatively charged substances such as heparin, phospholipids, and dextran sulfate. May prevent activation of the intrinsic blood coagulation cascade by binding to phospholipids on the surface of damaged cells.</text>
</comment>
<comment type="subcellular location">
    <subcellularLocation>
        <location>Secreted</location>
    </subcellularLocation>
</comment>
<comment type="tissue specificity">
    <text>Expressed by the liver and secreted in plasma.</text>
</comment>
<protein>
    <recommendedName>
        <fullName>Beta-2-glycoprotein 1</fullName>
    </recommendedName>
    <alternativeName>
        <fullName>Apolipoprotein H</fullName>
        <shortName>Apo-H</shortName>
    </alternativeName>
    <alternativeName>
        <fullName>Beta-2-glycoprotein I</fullName>
        <shortName>B2GPI</shortName>
        <shortName>Beta(2)GPI</shortName>
    </alternativeName>
</protein>
<gene>
    <name type="primary">APOH</name>
</gene>
<reference key="1">
    <citation type="journal article" date="1993" name="Biochem. Biophys. Res. Commun.">
        <title>Characterization and acute phase modulation of canine apolipoprotein H (beta 2-glycoprotein I).</title>
        <authorList>
            <person name="Sellar G.C."/>
            <person name="Keane J."/>
            <person name="Mehdi H."/>
            <person name="Peeples M.E."/>
            <person name="Browne N."/>
            <person name="Whitehead A.S."/>
        </authorList>
    </citation>
    <scope>NUCLEOTIDE SEQUENCE [MRNA]</scope>
    <source>
        <strain>Beagle</strain>
        <tissue>Liver</tissue>
    </source>
</reference>
<organism>
    <name type="scientific">Canis lupus familiaris</name>
    <name type="common">Dog</name>
    <name type="synonym">Canis familiaris</name>
    <dbReference type="NCBI Taxonomy" id="9615"/>
    <lineage>
        <taxon>Eukaryota</taxon>
        <taxon>Metazoa</taxon>
        <taxon>Chordata</taxon>
        <taxon>Craniata</taxon>
        <taxon>Vertebrata</taxon>
        <taxon>Euteleostomi</taxon>
        <taxon>Mammalia</taxon>
        <taxon>Eutheria</taxon>
        <taxon>Laurasiatheria</taxon>
        <taxon>Carnivora</taxon>
        <taxon>Caniformia</taxon>
        <taxon>Canidae</taxon>
        <taxon>Canis</taxon>
    </lineage>
</organism>
<keyword id="KW-1015">Disulfide bond</keyword>
<keyword id="KW-0325">Glycoprotein</keyword>
<keyword id="KW-0358">Heparin-binding</keyword>
<keyword id="KW-1185">Reference proteome</keyword>
<keyword id="KW-0677">Repeat</keyword>
<keyword id="KW-0964">Secreted</keyword>
<keyword id="KW-0732">Signal</keyword>
<keyword id="KW-0768">Sushi</keyword>
<evidence type="ECO:0000250" key="1"/>
<evidence type="ECO:0000250" key="2">
    <source>
        <dbReference type="UniProtKB" id="P17690"/>
    </source>
</evidence>
<evidence type="ECO:0000255" key="3"/>
<evidence type="ECO:0000255" key="4">
    <source>
        <dbReference type="PROSITE-ProRule" id="PRU00302"/>
    </source>
</evidence>